<dbReference type="EC" id="1.3.5.2" evidence="1"/>
<dbReference type="EMBL" id="CP000720">
    <property type="protein sequence ID" value="ABS47010.1"/>
    <property type="molecule type" value="Genomic_DNA"/>
</dbReference>
<dbReference type="RefSeq" id="WP_002211296.1">
    <property type="nucleotide sequence ID" value="NC_009708.1"/>
</dbReference>
<dbReference type="SMR" id="A7FJU2"/>
<dbReference type="GeneID" id="57977211"/>
<dbReference type="KEGG" id="ypi:YpsIP31758_2555"/>
<dbReference type="HOGENOM" id="CLU_013640_2_0_6"/>
<dbReference type="UniPathway" id="UPA00070">
    <property type="reaction ID" value="UER00946"/>
</dbReference>
<dbReference type="Proteomes" id="UP000002412">
    <property type="component" value="Chromosome"/>
</dbReference>
<dbReference type="GO" id="GO:0005737">
    <property type="term" value="C:cytoplasm"/>
    <property type="evidence" value="ECO:0007669"/>
    <property type="project" value="InterPro"/>
</dbReference>
<dbReference type="GO" id="GO:0005886">
    <property type="term" value="C:plasma membrane"/>
    <property type="evidence" value="ECO:0007669"/>
    <property type="project" value="UniProtKB-SubCell"/>
</dbReference>
<dbReference type="GO" id="GO:0106430">
    <property type="term" value="F:dihydroorotate dehydrogenase (quinone) activity"/>
    <property type="evidence" value="ECO:0007669"/>
    <property type="project" value="UniProtKB-EC"/>
</dbReference>
<dbReference type="GO" id="GO:0006207">
    <property type="term" value="P:'de novo' pyrimidine nucleobase biosynthetic process"/>
    <property type="evidence" value="ECO:0007669"/>
    <property type="project" value="InterPro"/>
</dbReference>
<dbReference type="GO" id="GO:0044205">
    <property type="term" value="P:'de novo' UMP biosynthetic process"/>
    <property type="evidence" value="ECO:0007669"/>
    <property type="project" value="UniProtKB-UniRule"/>
</dbReference>
<dbReference type="CDD" id="cd04738">
    <property type="entry name" value="DHOD_2_like"/>
    <property type="match status" value="1"/>
</dbReference>
<dbReference type="FunFam" id="3.20.20.70:FF:000028">
    <property type="entry name" value="Dihydroorotate dehydrogenase (quinone)"/>
    <property type="match status" value="1"/>
</dbReference>
<dbReference type="Gene3D" id="3.20.20.70">
    <property type="entry name" value="Aldolase class I"/>
    <property type="match status" value="1"/>
</dbReference>
<dbReference type="HAMAP" id="MF_00225">
    <property type="entry name" value="DHO_dh_type2"/>
    <property type="match status" value="1"/>
</dbReference>
<dbReference type="InterPro" id="IPR013785">
    <property type="entry name" value="Aldolase_TIM"/>
</dbReference>
<dbReference type="InterPro" id="IPR050074">
    <property type="entry name" value="DHO_dehydrogenase"/>
</dbReference>
<dbReference type="InterPro" id="IPR012135">
    <property type="entry name" value="Dihydroorotate_DH_1_2"/>
</dbReference>
<dbReference type="InterPro" id="IPR005719">
    <property type="entry name" value="Dihydroorotate_DH_2"/>
</dbReference>
<dbReference type="InterPro" id="IPR005720">
    <property type="entry name" value="Dihydroorotate_DH_cat"/>
</dbReference>
<dbReference type="InterPro" id="IPR001295">
    <property type="entry name" value="Dihydroorotate_DH_CS"/>
</dbReference>
<dbReference type="NCBIfam" id="NF003644">
    <property type="entry name" value="PRK05286.1-1"/>
    <property type="match status" value="1"/>
</dbReference>
<dbReference type="NCBIfam" id="NF003645">
    <property type="entry name" value="PRK05286.1-2"/>
    <property type="match status" value="1"/>
</dbReference>
<dbReference type="NCBIfam" id="NF003646">
    <property type="entry name" value="PRK05286.1-4"/>
    <property type="match status" value="1"/>
</dbReference>
<dbReference type="NCBIfam" id="NF003652">
    <property type="entry name" value="PRK05286.2-5"/>
    <property type="match status" value="1"/>
</dbReference>
<dbReference type="NCBIfam" id="TIGR01036">
    <property type="entry name" value="pyrD_sub2"/>
    <property type="match status" value="1"/>
</dbReference>
<dbReference type="PANTHER" id="PTHR48109:SF4">
    <property type="entry name" value="DIHYDROOROTATE DEHYDROGENASE (QUINONE), MITOCHONDRIAL"/>
    <property type="match status" value="1"/>
</dbReference>
<dbReference type="PANTHER" id="PTHR48109">
    <property type="entry name" value="DIHYDROOROTATE DEHYDROGENASE (QUINONE), MITOCHONDRIAL-RELATED"/>
    <property type="match status" value="1"/>
</dbReference>
<dbReference type="Pfam" id="PF01180">
    <property type="entry name" value="DHO_dh"/>
    <property type="match status" value="1"/>
</dbReference>
<dbReference type="PIRSF" id="PIRSF000164">
    <property type="entry name" value="DHO_oxidase"/>
    <property type="match status" value="1"/>
</dbReference>
<dbReference type="SUPFAM" id="SSF51395">
    <property type="entry name" value="FMN-linked oxidoreductases"/>
    <property type="match status" value="1"/>
</dbReference>
<dbReference type="PROSITE" id="PS00911">
    <property type="entry name" value="DHODEHASE_1"/>
    <property type="match status" value="1"/>
</dbReference>
<dbReference type="PROSITE" id="PS00912">
    <property type="entry name" value="DHODEHASE_2"/>
    <property type="match status" value="1"/>
</dbReference>
<reference key="1">
    <citation type="journal article" date="2007" name="PLoS Genet.">
        <title>The complete genome sequence of Yersinia pseudotuberculosis IP31758, the causative agent of Far East scarlet-like fever.</title>
        <authorList>
            <person name="Eppinger M."/>
            <person name="Rosovitz M.J."/>
            <person name="Fricke W.F."/>
            <person name="Rasko D.A."/>
            <person name="Kokorina G."/>
            <person name="Fayolle C."/>
            <person name="Lindler L.E."/>
            <person name="Carniel E."/>
            <person name="Ravel J."/>
        </authorList>
    </citation>
    <scope>NUCLEOTIDE SEQUENCE [LARGE SCALE GENOMIC DNA]</scope>
    <source>
        <strain>IP 31758</strain>
    </source>
</reference>
<gene>
    <name evidence="1" type="primary">pyrD</name>
    <name type="ordered locus">YpsIP31758_2555</name>
</gene>
<proteinExistence type="inferred from homology"/>
<evidence type="ECO:0000255" key="1">
    <source>
        <dbReference type="HAMAP-Rule" id="MF_00225"/>
    </source>
</evidence>
<comment type="function">
    <text evidence="1">Catalyzes the conversion of dihydroorotate to orotate with quinone as electron acceptor.</text>
</comment>
<comment type="catalytic activity">
    <reaction evidence="1">
        <text>(S)-dihydroorotate + a quinone = orotate + a quinol</text>
        <dbReference type="Rhea" id="RHEA:30187"/>
        <dbReference type="ChEBI" id="CHEBI:24646"/>
        <dbReference type="ChEBI" id="CHEBI:30839"/>
        <dbReference type="ChEBI" id="CHEBI:30864"/>
        <dbReference type="ChEBI" id="CHEBI:132124"/>
        <dbReference type="EC" id="1.3.5.2"/>
    </reaction>
</comment>
<comment type="cofactor">
    <cofactor evidence="1">
        <name>FMN</name>
        <dbReference type="ChEBI" id="CHEBI:58210"/>
    </cofactor>
    <text evidence="1">Binds 1 FMN per subunit.</text>
</comment>
<comment type="pathway">
    <text evidence="1">Pyrimidine metabolism; UMP biosynthesis via de novo pathway; orotate from (S)-dihydroorotate (quinone route): step 1/1.</text>
</comment>
<comment type="subunit">
    <text evidence="1">Monomer.</text>
</comment>
<comment type="subcellular location">
    <subcellularLocation>
        <location evidence="1">Cell membrane</location>
        <topology evidence="1">Peripheral membrane protein</topology>
    </subcellularLocation>
</comment>
<comment type="similarity">
    <text evidence="1">Belongs to the dihydroorotate dehydrogenase family. Type 2 subfamily.</text>
</comment>
<accession>A7FJU2</accession>
<feature type="chain" id="PRO_1000058685" description="Dihydroorotate dehydrogenase (quinone)">
    <location>
        <begin position="1"/>
        <end position="336"/>
    </location>
</feature>
<feature type="active site" description="Nucleophile" evidence="1">
    <location>
        <position position="175"/>
    </location>
</feature>
<feature type="binding site" evidence="1">
    <location>
        <begin position="62"/>
        <end position="66"/>
    </location>
    <ligand>
        <name>FMN</name>
        <dbReference type="ChEBI" id="CHEBI:58210"/>
    </ligand>
</feature>
<feature type="binding site" evidence="1">
    <location>
        <position position="66"/>
    </location>
    <ligand>
        <name>substrate</name>
    </ligand>
</feature>
<feature type="binding site" evidence="1">
    <location>
        <position position="86"/>
    </location>
    <ligand>
        <name>FMN</name>
        <dbReference type="ChEBI" id="CHEBI:58210"/>
    </ligand>
</feature>
<feature type="binding site" evidence="1">
    <location>
        <begin position="111"/>
        <end position="115"/>
    </location>
    <ligand>
        <name>substrate</name>
    </ligand>
</feature>
<feature type="binding site" evidence="1">
    <location>
        <position position="139"/>
    </location>
    <ligand>
        <name>FMN</name>
        <dbReference type="ChEBI" id="CHEBI:58210"/>
    </ligand>
</feature>
<feature type="binding site" evidence="1">
    <location>
        <position position="172"/>
    </location>
    <ligand>
        <name>FMN</name>
        <dbReference type="ChEBI" id="CHEBI:58210"/>
    </ligand>
</feature>
<feature type="binding site" evidence="1">
    <location>
        <position position="172"/>
    </location>
    <ligand>
        <name>substrate</name>
    </ligand>
</feature>
<feature type="binding site" evidence="1">
    <location>
        <position position="177"/>
    </location>
    <ligand>
        <name>substrate</name>
    </ligand>
</feature>
<feature type="binding site" evidence="1">
    <location>
        <position position="217"/>
    </location>
    <ligand>
        <name>FMN</name>
        <dbReference type="ChEBI" id="CHEBI:58210"/>
    </ligand>
</feature>
<feature type="binding site" evidence="1">
    <location>
        <position position="245"/>
    </location>
    <ligand>
        <name>FMN</name>
        <dbReference type="ChEBI" id="CHEBI:58210"/>
    </ligand>
</feature>
<feature type="binding site" evidence="1">
    <location>
        <begin position="246"/>
        <end position="247"/>
    </location>
    <ligand>
        <name>substrate</name>
    </ligand>
</feature>
<feature type="binding site" evidence="1">
    <location>
        <position position="268"/>
    </location>
    <ligand>
        <name>FMN</name>
        <dbReference type="ChEBI" id="CHEBI:58210"/>
    </ligand>
</feature>
<feature type="binding site" evidence="1">
    <location>
        <position position="297"/>
    </location>
    <ligand>
        <name>FMN</name>
        <dbReference type="ChEBI" id="CHEBI:58210"/>
    </ligand>
</feature>
<feature type="binding site" evidence="1">
    <location>
        <begin position="318"/>
        <end position="319"/>
    </location>
    <ligand>
        <name>FMN</name>
        <dbReference type="ChEBI" id="CHEBI:58210"/>
    </ligand>
</feature>
<sequence>MYYPLVRKALFQLDPERAHELTFRQLKRVSGTPLEFLVRQSVPTKPVSCMGLSFKNPVGLAAGLDKDGECIDALGAMGFGFIEVGTVTPRPQVGNDKPRLFRIVEAEGLINRMGFNNHGVDNLIENVKKSHFGGILGINIGKNKDTPVEQGKEDYLICMDKIYPYAGYIAINISSPNTPGLRSLQYGEALDDLLAAIKDKQTELHQRHHKYVPVAVKIAPDLTEEELIQIADSLVRHNIDGVIATNTTLDRSLIQGLNYCEQAGGLSGRPLQLRSTEVIHRLSQELKGRLPIIGVGGIDSVTAAREKMAAGASLIQIYSGFIFRGPGLIKNIVTHI</sequence>
<keyword id="KW-1003">Cell membrane</keyword>
<keyword id="KW-0285">Flavoprotein</keyword>
<keyword id="KW-0288">FMN</keyword>
<keyword id="KW-0472">Membrane</keyword>
<keyword id="KW-0560">Oxidoreductase</keyword>
<keyword id="KW-0665">Pyrimidine biosynthesis</keyword>
<organism>
    <name type="scientific">Yersinia pseudotuberculosis serotype O:1b (strain IP 31758)</name>
    <dbReference type="NCBI Taxonomy" id="349747"/>
    <lineage>
        <taxon>Bacteria</taxon>
        <taxon>Pseudomonadati</taxon>
        <taxon>Pseudomonadota</taxon>
        <taxon>Gammaproteobacteria</taxon>
        <taxon>Enterobacterales</taxon>
        <taxon>Yersiniaceae</taxon>
        <taxon>Yersinia</taxon>
    </lineage>
</organism>
<name>PYRD_YERP3</name>
<protein>
    <recommendedName>
        <fullName evidence="1">Dihydroorotate dehydrogenase (quinone)</fullName>
        <ecNumber evidence="1">1.3.5.2</ecNumber>
    </recommendedName>
    <alternativeName>
        <fullName evidence="1">DHOdehase</fullName>
        <shortName evidence="1">DHOD</shortName>
        <shortName evidence="1">DHODase</shortName>
    </alternativeName>
    <alternativeName>
        <fullName evidence="1">Dihydroorotate oxidase</fullName>
    </alternativeName>
</protein>